<organism>
    <name type="scientific">Coxiella burnetii (strain RSA 493 / Nine Mile phase I)</name>
    <dbReference type="NCBI Taxonomy" id="227377"/>
    <lineage>
        <taxon>Bacteria</taxon>
        <taxon>Pseudomonadati</taxon>
        <taxon>Pseudomonadota</taxon>
        <taxon>Gammaproteobacteria</taxon>
        <taxon>Legionellales</taxon>
        <taxon>Coxiellaceae</taxon>
        <taxon>Coxiella</taxon>
    </lineage>
</organism>
<reference key="1">
    <citation type="journal article" date="2003" name="Proc. Natl. Acad. Sci. U.S.A.">
        <title>Complete genome sequence of the Q-fever pathogen, Coxiella burnetii.</title>
        <authorList>
            <person name="Seshadri R."/>
            <person name="Paulsen I.T."/>
            <person name="Eisen J.A."/>
            <person name="Read T.D."/>
            <person name="Nelson K.E."/>
            <person name="Nelson W.C."/>
            <person name="Ward N.L."/>
            <person name="Tettelin H."/>
            <person name="Davidsen T.M."/>
            <person name="Beanan M.J."/>
            <person name="DeBoy R.T."/>
            <person name="Daugherty S.C."/>
            <person name="Brinkac L.M."/>
            <person name="Madupu R."/>
            <person name="Dodson R.J."/>
            <person name="Khouri H.M."/>
            <person name="Lee K.H."/>
            <person name="Carty H.A."/>
            <person name="Scanlan D."/>
            <person name="Heinzen R.A."/>
            <person name="Thompson H.A."/>
            <person name="Samuel J.E."/>
            <person name="Fraser C.M."/>
            <person name="Heidelberg J.F."/>
        </authorList>
    </citation>
    <scope>NUCLEOTIDE SEQUENCE [LARGE SCALE GENOMIC DNA]</scope>
    <source>
        <strain>RSA 493 / Nine Mile phase I</strain>
    </source>
</reference>
<sequence length="870" mass="99077">MKQGKSFIFYCLVLLLCGFQQLSSAVTASIAKAIKTTDRKQRVSETLPTGLSYRRFYQHIAHLLGWVPAPDLVCRGYFKEPLILTEHPHPGPATKEPAIVTAKGPSMVTAQGVSILRKDVVVTQPGRIVEADKAYIYRDSKTGHVTKIILIGHVRLHEADKRIVADKGTLTLYPKTAILMNAAYHIYNGEPYFYKFKYPFDAWGIAKHAVRDASNVITLRHATYSTCKPTAPAWSMSATTLVLNRNTHRGEAYNMLLHIGRVPIFYFPYFNFPIDNYRKTGFLIPYAGHSSSSGWFFALPFYWNMAPNYDLTLTPEFMSERGLNLQSLFRFLSTKSSGTIYLNYLPNDKVFQQFRETTLSKFPPSVLAEHPVFIPYVDKLKKMKNQRAFFSMNETTLFNSEWSSRVILNYVTDPYFFQDLGGQLGGSSLANQLLNQIDLQYNGLHWQFMGMLQAYQTLHLISQWTTPALDQYSRLPDFNIVGYYPDIARHVDFNFNAEAVNFDYRSDFVPDKPRGQRFHMRPGISFPFYFASGYIIPQLWADATAYNITHFQPGQAHTSSRLLPIFDIDSGLYFDRNFHLGHRSFIQTLEPRFFYLYVPYQNQDRFPNFDTVLLPFSFEQLFALNQFTGNDRLQNANQASFALTSRVLDAQNGSPILTANVGFIYYLENQRVCLTPGCTPSNYHYSPIIGELTFYPFPYWSFTGSLAWDPNLGQTNNTSVELAYNNGGKKADIRYLFVHGNEDSIVTPTTLIVPGNAYSQNTNHVISSGAWPLLKKWNAVGYWDYNITERRTDVYSIGVQYNTCCWALSFSIRRTYAGLKVDPNGALQRQYDTAYGFELQLKGLGNLGTAPISTVTVLDAMNNGVSNDVR</sequence>
<feature type="signal peptide" evidence="1">
    <location>
        <begin position="1"/>
        <end position="25"/>
    </location>
</feature>
<feature type="chain" id="PRO_0000281600" description="LPS-assembly protein LptD">
    <location>
        <begin position="26"/>
        <end position="870"/>
    </location>
</feature>
<evidence type="ECO:0000255" key="1">
    <source>
        <dbReference type="HAMAP-Rule" id="MF_01411"/>
    </source>
</evidence>
<gene>
    <name evidence="1" type="primary">lptD</name>
    <name type="synonym">imp</name>
    <name type="synonym">ostA</name>
    <name type="ordered locus">CBU_1978</name>
</gene>
<comment type="function">
    <text evidence="1">Together with LptE, is involved in the assembly of lipopolysaccharide (LPS) at the surface of the outer membrane.</text>
</comment>
<comment type="subunit">
    <text evidence="1">Component of the lipopolysaccharide transport and assembly complex. Interacts with LptE and LptA.</text>
</comment>
<comment type="subcellular location">
    <subcellularLocation>
        <location evidence="1">Cell outer membrane</location>
    </subcellularLocation>
</comment>
<comment type="similarity">
    <text evidence="1">Belongs to the LptD family.</text>
</comment>
<keyword id="KW-0998">Cell outer membrane</keyword>
<keyword id="KW-0472">Membrane</keyword>
<keyword id="KW-1185">Reference proteome</keyword>
<keyword id="KW-0732">Signal</keyword>
<protein>
    <recommendedName>
        <fullName evidence="1">LPS-assembly protein LptD</fullName>
    </recommendedName>
</protein>
<dbReference type="EMBL" id="AE016828">
    <property type="protein sequence ID" value="AAO91467.1"/>
    <property type="molecule type" value="Genomic_DNA"/>
</dbReference>
<dbReference type="RefSeq" id="NP_820953.1">
    <property type="nucleotide sequence ID" value="NC_002971.3"/>
</dbReference>
<dbReference type="RefSeq" id="WP_005772437.1">
    <property type="nucleotide sequence ID" value="NZ_CCYB01000065.1"/>
</dbReference>
<dbReference type="SMR" id="Q83AC6"/>
<dbReference type="STRING" id="227377.CBU_1978"/>
<dbReference type="EnsemblBacteria" id="AAO91467">
    <property type="protein sequence ID" value="AAO91467"/>
    <property type="gene ID" value="CBU_1978"/>
</dbReference>
<dbReference type="GeneID" id="1209891"/>
<dbReference type="KEGG" id="cbu:CBU_1978"/>
<dbReference type="PATRIC" id="fig|227377.7.peg.1966"/>
<dbReference type="eggNOG" id="COG1452">
    <property type="taxonomic scope" value="Bacteria"/>
</dbReference>
<dbReference type="HOGENOM" id="CLU_009039_0_0_6"/>
<dbReference type="OrthoDB" id="9760225at2"/>
<dbReference type="Proteomes" id="UP000002671">
    <property type="component" value="Chromosome"/>
</dbReference>
<dbReference type="GO" id="GO:0009279">
    <property type="term" value="C:cell outer membrane"/>
    <property type="evidence" value="ECO:0000318"/>
    <property type="project" value="GO_Central"/>
</dbReference>
<dbReference type="GO" id="GO:1990351">
    <property type="term" value="C:transporter complex"/>
    <property type="evidence" value="ECO:0000318"/>
    <property type="project" value="GO_Central"/>
</dbReference>
<dbReference type="GO" id="GO:0043165">
    <property type="term" value="P:Gram-negative-bacterium-type cell outer membrane assembly"/>
    <property type="evidence" value="ECO:0007669"/>
    <property type="project" value="UniProtKB-UniRule"/>
</dbReference>
<dbReference type="GO" id="GO:0015920">
    <property type="term" value="P:lipopolysaccharide transport"/>
    <property type="evidence" value="ECO:0007669"/>
    <property type="project" value="InterPro"/>
</dbReference>
<dbReference type="HAMAP" id="MF_01411">
    <property type="entry name" value="LPS_assembly_LptD"/>
    <property type="match status" value="1"/>
</dbReference>
<dbReference type="InterPro" id="IPR020889">
    <property type="entry name" value="LipoPS_assembly_LptD"/>
</dbReference>
<dbReference type="InterPro" id="IPR050218">
    <property type="entry name" value="LptD"/>
</dbReference>
<dbReference type="InterPro" id="IPR007543">
    <property type="entry name" value="LptD_C"/>
</dbReference>
<dbReference type="PANTHER" id="PTHR30189">
    <property type="entry name" value="LPS-ASSEMBLY PROTEIN"/>
    <property type="match status" value="1"/>
</dbReference>
<dbReference type="PANTHER" id="PTHR30189:SF1">
    <property type="entry name" value="LPS-ASSEMBLY PROTEIN LPTD"/>
    <property type="match status" value="1"/>
</dbReference>
<dbReference type="Pfam" id="PF04453">
    <property type="entry name" value="LptD"/>
    <property type="match status" value="1"/>
</dbReference>
<name>LPTD_COXBU</name>
<accession>Q83AC6</accession>
<proteinExistence type="inferred from homology"/>